<organism>
    <name type="scientific">Synechococcus sp. (strain JA-2-3B'a(2-13))</name>
    <name type="common">Cyanobacteria bacterium Yellowstone B-Prime</name>
    <dbReference type="NCBI Taxonomy" id="321332"/>
    <lineage>
        <taxon>Bacteria</taxon>
        <taxon>Bacillati</taxon>
        <taxon>Cyanobacteriota</taxon>
        <taxon>Cyanophyceae</taxon>
        <taxon>Synechococcales</taxon>
        <taxon>Synechococcaceae</taxon>
        <taxon>Synechococcus</taxon>
    </lineage>
</organism>
<reference key="1">
    <citation type="journal article" date="2007" name="ISME J.">
        <title>Population level functional diversity in a microbial community revealed by comparative genomic and metagenomic analyses.</title>
        <authorList>
            <person name="Bhaya D."/>
            <person name="Grossman A.R."/>
            <person name="Steunou A.-S."/>
            <person name="Khuri N."/>
            <person name="Cohan F.M."/>
            <person name="Hamamura N."/>
            <person name="Melendrez M.C."/>
            <person name="Bateson M.M."/>
            <person name="Ward D.M."/>
            <person name="Heidelberg J.F."/>
        </authorList>
    </citation>
    <scope>NUCLEOTIDE SEQUENCE [LARGE SCALE GENOMIC DNA]</scope>
    <source>
        <strain>JA-2-3B'a(2-13)</strain>
    </source>
</reference>
<name>PLSX_SYNJB</name>
<keyword id="KW-0963">Cytoplasm</keyword>
<keyword id="KW-0444">Lipid biosynthesis</keyword>
<keyword id="KW-0443">Lipid metabolism</keyword>
<keyword id="KW-0594">Phospholipid biosynthesis</keyword>
<keyword id="KW-1208">Phospholipid metabolism</keyword>
<keyword id="KW-1185">Reference proteome</keyword>
<keyword id="KW-0808">Transferase</keyword>
<feature type="chain" id="PRO_0000329273" description="Phosphate acyltransferase">
    <location>
        <begin position="1"/>
        <end position="374"/>
    </location>
</feature>
<feature type="region of interest" description="Disordered" evidence="2">
    <location>
        <begin position="323"/>
        <end position="374"/>
    </location>
</feature>
<feature type="compositionally biased region" description="Basic and acidic residues" evidence="2">
    <location>
        <begin position="326"/>
        <end position="335"/>
    </location>
</feature>
<comment type="function">
    <text evidence="1">Catalyzes the reversible formation of acyl-phosphate (acyl-PO(4)) from acyl-[acyl-carrier-protein] (acyl-ACP). This enzyme utilizes acyl-ACP as fatty acyl donor, but not acyl-CoA.</text>
</comment>
<comment type="catalytic activity">
    <reaction evidence="1">
        <text>a fatty acyl-[ACP] + phosphate = an acyl phosphate + holo-[ACP]</text>
        <dbReference type="Rhea" id="RHEA:42292"/>
        <dbReference type="Rhea" id="RHEA-COMP:9685"/>
        <dbReference type="Rhea" id="RHEA-COMP:14125"/>
        <dbReference type="ChEBI" id="CHEBI:43474"/>
        <dbReference type="ChEBI" id="CHEBI:59918"/>
        <dbReference type="ChEBI" id="CHEBI:64479"/>
        <dbReference type="ChEBI" id="CHEBI:138651"/>
        <dbReference type="EC" id="2.3.1.274"/>
    </reaction>
</comment>
<comment type="pathway">
    <text evidence="1">Lipid metabolism; phospholipid metabolism.</text>
</comment>
<comment type="subunit">
    <text evidence="1">Homodimer. Probably interacts with PlsY.</text>
</comment>
<comment type="subcellular location">
    <subcellularLocation>
        <location evidence="1">Cytoplasm</location>
    </subcellularLocation>
    <text evidence="1">Associated with the membrane possibly through PlsY.</text>
</comment>
<comment type="similarity">
    <text evidence="1">Belongs to the PlsX family.</text>
</comment>
<proteinExistence type="inferred from homology"/>
<gene>
    <name evidence="1" type="primary">plsX</name>
    <name type="ordered locus">CYB_2341</name>
</gene>
<sequence length="374" mass="40412">MRIAVDAMGGDYAPEEIIKGALLAHRQLRVGIALVGRPDSLKPFLPQPLPAGITIVPAEEDVGMAEEPLMVRKKPKASINISMQQVRSNQADAVVAAGNTGAAMAAAYLNLGRLAGIDRPAIGALLPTLKGKPVLLLDVGANVDCRPRFLEQFARMGSLYCQCVLGIEKPRVGLLNIGEEPNKGNDLALATHQRLAQLPGIHFAGNAEGRDVLTGEFDVVVCDGFVGNALLKFAESVGQVITQVLREELPRGWRGKLGCWLLRPNLKQVKRRMDYVEYGGALLLGVNGICVITHGSSKAPMVYHAIRLAKEAAEQKILQRLQAEMVDPREPESNPRRRTRPLQVYSGSGPEVLPLGSLERTSSRCPEPVEDAQP</sequence>
<evidence type="ECO:0000255" key="1">
    <source>
        <dbReference type="HAMAP-Rule" id="MF_00019"/>
    </source>
</evidence>
<evidence type="ECO:0000256" key="2">
    <source>
        <dbReference type="SAM" id="MobiDB-lite"/>
    </source>
</evidence>
<protein>
    <recommendedName>
        <fullName evidence="1">Phosphate acyltransferase</fullName>
        <ecNumber evidence="1">2.3.1.274</ecNumber>
    </recommendedName>
    <alternativeName>
        <fullName evidence="1">Acyl-ACP phosphotransacylase</fullName>
    </alternativeName>
    <alternativeName>
        <fullName evidence="1">Acyl-[acyl-carrier-protein]--phosphate acyltransferase</fullName>
    </alternativeName>
    <alternativeName>
        <fullName evidence="1">Phosphate-acyl-ACP acyltransferase</fullName>
    </alternativeName>
</protein>
<accession>Q2JJA1</accession>
<dbReference type="EC" id="2.3.1.274" evidence="1"/>
<dbReference type="EMBL" id="CP000240">
    <property type="protein sequence ID" value="ABD03280.1"/>
    <property type="molecule type" value="Genomic_DNA"/>
</dbReference>
<dbReference type="SMR" id="Q2JJA1"/>
<dbReference type="STRING" id="321332.CYB_2341"/>
<dbReference type="KEGG" id="cyb:CYB_2341"/>
<dbReference type="eggNOG" id="COG0416">
    <property type="taxonomic scope" value="Bacteria"/>
</dbReference>
<dbReference type="HOGENOM" id="CLU_039379_1_1_3"/>
<dbReference type="OrthoDB" id="9806408at2"/>
<dbReference type="UniPathway" id="UPA00085"/>
<dbReference type="Proteomes" id="UP000001938">
    <property type="component" value="Chromosome"/>
</dbReference>
<dbReference type="GO" id="GO:0005737">
    <property type="term" value="C:cytoplasm"/>
    <property type="evidence" value="ECO:0007669"/>
    <property type="project" value="UniProtKB-SubCell"/>
</dbReference>
<dbReference type="GO" id="GO:0043811">
    <property type="term" value="F:phosphate:acyl-[acyl carrier protein] acyltransferase activity"/>
    <property type="evidence" value="ECO:0007669"/>
    <property type="project" value="UniProtKB-UniRule"/>
</dbReference>
<dbReference type="GO" id="GO:0006633">
    <property type="term" value="P:fatty acid biosynthetic process"/>
    <property type="evidence" value="ECO:0007669"/>
    <property type="project" value="UniProtKB-UniRule"/>
</dbReference>
<dbReference type="GO" id="GO:0008654">
    <property type="term" value="P:phospholipid biosynthetic process"/>
    <property type="evidence" value="ECO:0007669"/>
    <property type="project" value="UniProtKB-KW"/>
</dbReference>
<dbReference type="Gene3D" id="3.40.718.10">
    <property type="entry name" value="Isopropylmalate Dehydrogenase"/>
    <property type="match status" value="1"/>
</dbReference>
<dbReference type="HAMAP" id="MF_00019">
    <property type="entry name" value="PlsX"/>
    <property type="match status" value="1"/>
</dbReference>
<dbReference type="InterPro" id="IPR003664">
    <property type="entry name" value="FA_synthesis"/>
</dbReference>
<dbReference type="InterPro" id="IPR012281">
    <property type="entry name" value="Phospholipid_synth_PlsX-like"/>
</dbReference>
<dbReference type="NCBIfam" id="TIGR00182">
    <property type="entry name" value="plsX"/>
    <property type="match status" value="1"/>
</dbReference>
<dbReference type="PANTHER" id="PTHR30100">
    <property type="entry name" value="FATTY ACID/PHOSPHOLIPID SYNTHESIS PROTEIN PLSX"/>
    <property type="match status" value="1"/>
</dbReference>
<dbReference type="PANTHER" id="PTHR30100:SF1">
    <property type="entry name" value="PHOSPHATE ACYLTRANSFERASE"/>
    <property type="match status" value="1"/>
</dbReference>
<dbReference type="Pfam" id="PF02504">
    <property type="entry name" value="FA_synthesis"/>
    <property type="match status" value="1"/>
</dbReference>
<dbReference type="PIRSF" id="PIRSF002465">
    <property type="entry name" value="Phsphlp_syn_PlsX"/>
    <property type="match status" value="1"/>
</dbReference>
<dbReference type="SUPFAM" id="SSF53659">
    <property type="entry name" value="Isocitrate/Isopropylmalate dehydrogenase-like"/>
    <property type="match status" value="1"/>
</dbReference>